<comment type="function">
    <text evidence="1">Probably involved in membrane trafficking.</text>
</comment>
<comment type="subcellular location">
    <subcellularLocation>
        <location evidence="1">Cell membrane</location>
        <topology evidence="1">Multi-pass membrane protein</topology>
    </subcellularLocation>
    <subcellularLocation>
        <location evidence="1">Cytoplasmic vesicle</location>
        <location evidence="1">Secretory vesicle membrane</location>
        <topology evidence="1">Multi-pass membrane protein</topology>
    </subcellularLocation>
</comment>
<comment type="similarity">
    <text evidence="4">Belongs to the SCAMP family.</text>
</comment>
<sequence>MAGRYDSNPFEEDDVNPFSEQARGKAGGQPSYGGGAFYMPNPRNVPSVSSNSRLSPLPPEPAAFGATVDIPLDSSKDLKNREKELQAREAELNKREKELKRREEAAARAGIVIEEKNWPPFLPLIHHDITNEIPSHLQRMQYVAFASFLGLACCLFWNVIAVTSAWVKGEGVKIWLLAIIYFISGVPGAYVLWYRPLYNAMRTDSALKFGLFFLVYLFHILFCVFSAVAPPVVFEGKSLAGILPAIDLISKNALVGIFYFVGFGLFCVESLLSIWVIQQVYMYFRGSGKAAEMKRDATRGAMRAAF</sequence>
<protein>
    <recommendedName>
        <fullName>Secretory carrier-associated membrane protein 1</fullName>
        <shortName>Secretory carrier membrane protein 1</shortName>
    </recommendedName>
</protein>
<feature type="chain" id="PRO_0000304905" description="Secretory carrier-associated membrane protein 1">
    <location>
        <begin position="1"/>
        <end position="306"/>
    </location>
</feature>
<feature type="topological domain" description="Cytoplasmic" evidence="2">
    <location>
        <begin position="1"/>
        <end position="141"/>
    </location>
</feature>
<feature type="transmembrane region" description="Helical" evidence="2">
    <location>
        <begin position="142"/>
        <end position="162"/>
    </location>
</feature>
<feature type="transmembrane region" description="Helical" evidence="2">
    <location>
        <begin position="174"/>
        <end position="194"/>
    </location>
</feature>
<feature type="transmembrane region" description="Helical" evidence="2">
    <location>
        <begin position="209"/>
        <end position="229"/>
    </location>
</feature>
<feature type="transmembrane region" description="Helical" evidence="2">
    <location>
        <begin position="257"/>
        <end position="277"/>
    </location>
</feature>
<feature type="topological domain" description="Cytoplasmic" evidence="2">
    <location>
        <begin position="278"/>
        <end position="306"/>
    </location>
</feature>
<feature type="region of interest" description="Disordered" evidence="3">
    <location>
        <begin position="1"/>
        <end position="66"/>
    </location>
</feature>
<feature type="coiled-coil region" evidence="2">
    <location>
        <begin position="72"/>
        <end position="109"/>
    </location>
</feature>
<feature type="compositionally biased region" description="Gly residues" evidence="3">
    <location>
        <begin position="25"/>
        <end position="36"/>
    </location>
</feature>
<feature type="compositionally biased region" description="Low complexity" evidence="3">
    <location>
        <begin position="40"/>
        <end position="55"/>
    </location>
</feature>
<keyword id="KW-1003">Cell membrane</keyword>
<keyword id="KW-0175">Coiled coil</keyword>
<keyword id="KW-0968">Cytoplasmic vesicle</keyword>
<keyword id="KW-0472">Membrane</keyword>
<keyword id="KW-1185">Reference proteome</keyword>
<keyword id="KW-0812">Transmembrane</keyword>
<keyword id="KW-1133">Transmembrane helix</keyword>
<keyword id="KW-0813">Transport</keyword>
<gene>
    <name type="primary">SCAMP1</name>
    <name type="ordered locus">Os07g0564600</name>
    <name type="ordered locus">LOC_Os07g37740</name>
    <name type="ORF">OJ1112_E08.118</name>
    <name type="ORF">OsJ_023796</name>
</gene>
<accession>Q8H5X5</accession>
<accession>B7E5U7</accession>
<dbReference type="EMBL" id="AP003705">
    <property type="protein sequence ID" value="BAC15812.1"/>
    <property type="molecule type" value="Genomic_DNA"/>
</dbReference>
<dbReference type="EMBL" id="AP008213">
    <property type="protein sequence ID" value="BAF21918.1"/>
    <property type="molecule type" value="Genomic_DNA"/>
</dbReference>
<dbReference type="EMBL" id="AP014963">
    <property type="protein sequence ID" value="BAT02167.1"/>
    <property type="molecule type" value="Genomic_DNA"/>
</dbReference>
<dbReference type="EMBL" id="CM000144">
    <property type="protein sequence ID" value="EAZ40313.1"/>
    <property type="molecule type" value="Genomic_DNA"/>
</dbReference>
<dbReference type="EMBL" id="AK061125">
    <property type="protein sequence ID" value="BAG87744.1"/>
    <property type="molecule type" value="mRNA"/>
</dbReference>
<dbReference type="EMBL" id="AK102110">
    <property type="protein sequence ID" value="BAG95389.1"/>
    <property type="molecule type" value="mRNA"/>
</dbReference>
<dbReference type="RefSeq" id="XP_015644814.1">
    <property type="nucleotide sequence ID" value="XM_015789328.1"/>
</dbReference>
<dbReference type="SMR" id="Q8H5X5"/>
<dbReference type="FunCoup" id="Q8H5X5">
    <property type="interactions" value="1412"/>
</dbReference>
<dbReference type="STRING" id="39947.Q8H5X5"/>
<dbReference type="PaxDb" id="39947-Q8H5X5"/>
<dbReference type="EnsemblPlants" id="Os07t0564600-01">
    <property type="protein sequence ID" value="Os07t0564600-01"/>
    <property type="gene ID" value="Os07g0564600"/>
</dbReference>
<dbReference type="EnsemblPlants" id="Os07t0564600-02">
    <property type="protein sequence ID" value="Os07t0564600-02"/>
    <property type="gene ID" value="Os07g0564600"/>
</dbReference>
<dbReference type="Gramene" id="Os07t0564600-01">
    <property type="protein sequence ID" value="Os07t0564600-01"/>
    <property type="gene ID" value="Os07g0564600"/>
</dbReference>
<dbReference type="Gramene" id="Os07t0564600-02">
    <property type="protein sequence ID" value="Os07t0564600-02"/>
    <property type="gene ID" value="Os07g0564600"/>
</dbReference>
<dbReference type="KEGG" id="dosa:Os07g0564600"/>
<dbReference type="eggNOG" id="KOG3088">
    <property type="taxonomic scope" value="Eukaryota"/>
</dbReference>
<dbReference type="HOGENOM" id="CLU_066546_3_0_1"/>
<dbReference type="InParanoid" id="Q8H5X5"/>
<dbReference type="OMA" id="NMVACIF"/>
<dbReference type="OrthoDB" id="242866at2759"/>
<dbReference type="Proteomes" id="UP000000763">
    <property type="component" value="Chromosome 7"/>
</dbReference>
<dbReference type="Proteomes" id="UP000007752">
    <property type="component" value="Chromosome 7"/>
</dbReference>
<dbReference type="Proteomes" id="UP000059680">
    <property type="component" value="Chromosome 7"/>
</dbReference>
<dbReference type="GO" id="GO:0005769">
    <property type="term" value="C:early endosome"/>
    <property type="evidence" value="ECO:0000314"/>
    <property type="project" value="Gramene"/>
</dbReference>
<dbReference type="GO" id="GO:0005886">
    <property type="term" value="C:plasma membrane"/>
    <property type="evidence" value="ECO:0000314"/>
    <property type="project" value="Gramene"/>
</dbReference>
<dbReference type="GO" id="GO:0055038">
    <property type="term" value="C:recycling endosome membrane"/>
    <property type="evidence" value="ECO:0000318"/>
    <property type="project" value="GO_Central"/>
</dbReference>
<dbReference type="GO" id="GO:0032588">
    <property type="term" value="C:trans-Golgi network membrane"/>
    <property type="evidence" value="ECO:0000318"/>
    <property type="project" value="GO_Central"/>
</dbReference>
<dbReference type="GO" id="GO:0030658">
    <property type="term" value="C:transport vesicle membrane"/>
    <property type="evidence" value="ECO:0007669"/>
    <property type="project" value="UniProtKB-SubCell"/>
</dbReference>
<dbReference type="GO" id="GO:0015031">
    <property type="term" value="P:protein transport"/>
    <property type="evidence" value="ECO:0000318"/>
    <property type="project" value="GO_Central"/>
</dbReference>
<dbReference type="InterPro" id="IPR007273">
    <property type="entry name" value="SCAMP"/>
</dbReference>
<dbReference type="PANTHER" id="PTHR10687:SF74">
    <property type="entry name" value="SECRETORY CARRIER-ASSOCIATED MEMBRANE PROTEIN 1"/>
    <property type="match status" value="1"/>
</dbReference>
<dbReference type="PANTHER" id="PTHR10687">
    <property type="entry name" value="SECRETORY CARRIER-ASSOCIATED MEMBRANE PROTEIN SCAMP"/>
    <property type="match status" value="1"/>
</dbReference>
<dbReference type="Pfam" id="PF04144">
    <property type="entry name" value="SCAMP"/>
    <property type="match status" value="1"/>
</dbReference>
<reference key="1">
    <citation type="journal article" date="2005" name="Nature">
        <title>The map-based sequence of the rice genome.</title>
        <authorList>
            <consortium name="International rice genome sequencing project (IRGSP)"/>
        </authorList>
    </citation>
    <scope>NUCLEOTIDE SEQUENCE [LARGE SCALE GENOMIC DNA]</scope>
    <source>
        <strain>cv. Nipponbare</strain>
    </source>
</reference>
<reference key="2">
    <citation type="journal article" date="2008" name="Nucleic Acids Res.">
        <title>The rice annotation project database (RAP-DB): 2008 update.</title>
        <authorList>
            <consortium name="The rice annotation project (RAP)"/>
        </authorList>
    </citation>
    <scope>GENOME REANNOTATION</scope>
    <source>
        <strain>cv. Nipponbare</strain>
    </source>
</reference>
<reference key="3">
    <citation type="journal article" date="2013" name="Rice">
        <title>Improvement of the Oryza sativa Nipponbare reference genome using next generation sequence and optical map data.</title>
        <authorList>
            <person name="Kawahara Y."/>
            <person name="de la Bastide M."/>
            <person name="Hamilton J.P."/>
            <person name="Kanamori H."/>
            <person name="McCombie W.R."/>
            <person name="Ouyang S."/>
            <person name="Schwartz D.C."/>
            <person name="Tanaka T."/>
            <person name="Wu J."/>
            <person name="Zhou S."/>
            <person name="Childs K.L."/>
            <person name="Davidson R.M."/>
            <person name="Lin H."/>
            <person name="Quesada-Ocampo L."/>
            <person name="Vaillancourt B."/>
            <person name="Sakai H."/>
            <person name="Lee S.S."/>
            <person name="Kim J."/>
            <person name="Numa H."/>
            <person name="Itoh T."/>
            <person name="Buell C.R."/>
            <person name="Matsumoto T."/>
        </authorList>
    </citation>
    <scope>GENOME REANNOTATION</scope>
    <source>
        <strain>cv. Nipponbare</strain>
    </source>
</reference>
<reference key="4">
    <citation type="journal article" date="2005" name="PLoS Biol.">
        <title>The genomes of Oryza sativa: a history of duplications.</title>
        <authorList>
            <person name="Yu J."/>
            <person name="Wang J."/>
            <person name="Lin W."/>
            <person name="Li S."/>
            <person name="Li H."/>
            <person name="Zhou J."/>
            <person name="Ni P."/>
            <person name="Dong W."/>
            <person name="Hu S."/>
            <person name="Zeng C."/>
            <person name="Zhang J."/>
            <person name="Zhang Y."/>
            <person name="Li R."/>
            <person name="Xu Z."/>
            <person name="Li S."/>
            <person name="Li X."/>
            <person name="Zheng H."/>
            <person name="Cong L."/>
            <person name="Lin L."/>
            <person name="Yin J."/>
            <person name="Geng J."/>
            <person name="Li G."/>
            <person name="Shi J."/>
            <person name="Liu J."/>
            <person name="Lv H."/>
            <person name="Li J."/>
            <person name="Wang J."/>
            <person name="Deng Y."/>
            <person name="Ran L."/>
            <person name="Shi X."/>
            <person name="Wang X."/>
            <person name="Wu Q."/>
            <person name="Li C."/>
            <person name="Ren X."/>
            <person name="Wang J."/>
            <person name="Wang X."/>
            <person name="Li D."/>
            <person name="Liu D."/>
            <person name="Zhang X."/>
            <person name="Ji Z."/>
            <person name="Zhao W."/>
            <person name="Sun Y."/>
            <person name="Zhang Z."/>
            <person name="Bao J."/>
            <person name="Han Y."/>
            <person name="Dong L."/>
            <person name="Ji J."/>
            <person name="Chen P."/>
            <person name="Wu S."/>
            <person name="Liu J."/>
            <person name="Xiao Y."/>
            <person name="Bu D."/>
            <person name="Tan J."/>
            <person name="Yang L."/>
            <person name="Ye C."/>
            <person name="Zhang J."/>
            <person name="Xu J."/>
            <person name="Zhou Y."/>
            <person name="Yu Y."/>
            <person name="Zhang B."/>
            <person name="Zhuang S."/>
            <person name="Wei H."/>
            <person name="Liu B."/>
            <person name="Lei M."/>
            <person name="Yu H."/>
            <person name="Li Y."/>
            <person name="Xu H."/>
            <person name="Wei S."/>
            <person name="He X."/>
            <person name="Fang L."/>
            <person name="Zhang Z."/>
            <person name="Zhang Y."/>
            <person name="Huang X."/>
            <person name="Su Z."/>
            <person name="Tong W."/>
            <person name="Li J."/>
            <person name="Tong Z."/>
            <person name="Li S."/>
            <person name="Ye J."/>
            <person name="Wang L."/>
            <person name="Fang L."/>
            <person name="Lei T."/>
            <person name="Chen C.-S."/>
            <person name="Chen H.-C."/>
            <person name="Xu Z."/>
            <person name="Li H."/>
            <person name="Huang H."/>
            <person name="Zhang F."/>
            <person name="Xu H."/>
            <person name="Li N."/>
            <person name="Zhao C."/>
            <person name="Li S."/>
            <person name="Dong L."/>
            <person name="Huang Y."/>
            <person name="Li L."/>
            <person name="Xi Y."/>
            <person name="Qi Q."/>
            <person name="Li W."/>
            <person name="Zhang B."/>
            <person name="Hu W."/>
            <person name="Zhang Y."/>
            <person name="Tian X."/>
            <person name="Jiao Y."/>
            <person name="Liang X."/>
            <person name="Jin J."/>
            <person name="Gao L."/>
            <person name="Zheng W."/>
            <person name="Hao B."/>
            <person name="Liu S.-M."/>
            <person name="Wang W."/>
            <person name="Yuan L."/>
            <person name="Cao M."/>
            <person name="McDermott J."/>
            <person name="Samudrala R."/>
            <person name="Wang J."/>
            <person name="Wong G.K.-S."/>
            <person name="Yang H."/>
        </authorList>
    </citation>
    <scope>NUCLEOTIDE SEQUENCE [LARGE SCALE GENOMIC DNA]</scope>
    <source>
        <strain>cv. Nipponbare</strain>
    </source>
</reference>
<reference key="5">
    <citation type="journal article" date="2003" name="Science">
        <title>Collection, mapping, and annotation of over 28,000 cDNA clones from japonica rice.</title>
        <authorList>
            <consortium name="The rice full-length cDNA consortium"/>
        </authorList>
    </citation>
    <scope>NUCLEOTIDE SEQUENCE [LARGE SCALE MRNA]</scope>
    <source>
        <strain>cv. Nipponbare</strain>
    </source>
</reference>
<evidence type="ECO:0000250" key="1"/>
<evidence type="ECO:0000255" key="2"/>
<evidence type="ECO:0000256" key="3">
    <source>
        <dbReference type="SAM" id="MobiDB-lite"/>
    </source>
</evidence>
<evidence type="ECO:0000305" key="4"/>
<name>SCAM1_ORYSJ</name>
<proteinExistence type="evidence at transcript level"/>
<organism>
    <name type="scientific">Oryza sativa subsp. japonica</name>
    <name type="common">Rice</name>
    <dbReference type="NCBI Taxonomy" id="39947"/>
    <lineage>
        <taxon>Eukaryota</taxon>
        <taxon>Viridiplantae</taxon>
        <taxon>Streptophyta</taxon>
        <taxon>Embryophyta</taxon>
        <taxon>Tracheophyta</taxon>
        <taxon>Spermatophyta</taxon>
        <taxon>Magnoliopsida</taxon>
        <taxon>Liliopsida</taxon>
        <taxon>Poales</taxon>
        <taxon>Poaceae</taxon>
        <taxon>BOP clade</taxon>
        <taxon>Oryzoideae</taxon>
        <taxon>Oryzeae</taxon>
        <taxon>Oryzinae</taxon>
        <taxon>Oryza</taxon>
        <taxon>Oryza sativa</taxon>
    </lineage>
</organism>